<protein>
    <recommendedName>
        <fullName evidence="1">DNA-directed RNA polymerase subunit omega</fullName>
        <shortName evidence="1">RNAP omega subunit</shortName>
        <ecNumber evidence="1">2.7.7.6</ecNumber>
    </recommendedName>
    <alternativeName>
        <fullName evidence="1">RNA polymerase omega subunit</fullName>
    </alternativeName>
    <alternativeName>
        <fullName evidence="1">Transcriptase subunit omega</fullName>
    </alternativeName>
</protein>
<accession>Q8ZJQ3</accession>
<accession>Q0WKQ3</accession>
<reference key="1">
    <citation type="journal article" date="2001" name="Nature">
        <title>Genome sequence of Yersinia pestis, the causative agent of plague.</title>
        <authorList>
            <person name="Parkhill J."/>
            <person name="Wren B.W."/>
            <person name="Thomson N.R."/>
            <person name="Titball R.W."/>
            <person name="Holden M.T.G."/>
            <person name="Prentice M.B."/>
            <person name="Sebaihia M."/>
            <person name="James K.D."/>
            <person name="Churcher C.M."/>
            <person name="Mungall K.L."/>
            <person name="Baker S."/>
            <person name="Basham D."/>
            <person name="Bentley S.D."/>
            <person name="Brooks K."/>
            <person name="Cerdeno-Tarraga A.-M."/>
            <person name="Chillingworth T."/>
            <person name="Cronin A."/>
            <person name="Davies R.M."/>
            <person name="Davis P."/>
            <person name="Dougan G."/>
            <person name="Feltwell T."/>
            <person name="Hamlin N."/>
            <person name="Holroyd S."/>
            <person name="Jagels K."/>
            <person name="Karlyshev A.V."/>
            <person name="Leather S."/>
            <person name="Moule S."/>
            <person name="Oyston P.C.F."/>
            <person name="Quail M.A."/>
            <person name="Rutherford K.M."/>
            <person name="Simmonds M."/>
            <person name="Skelton J."/>
            <person name="Stevens K."/>
            <person name="Whitehead S."/>
            <person name="Barrell B.G."/>
        </authorList>
    </citation>
    <scope>NUCLEOTIDE SEQUENCE [LARGE SCALE GENOMIC DNA]</scope>
    <source>
        <strain>CO-92 / Biovar Orientalis</strain>
    </source>
</reference>
<reference key="2">
    <citation type="journal article" date="2002" name="J. Bacteriol.">
        <title>Genome sequence of Yersinia pestis KIM.</title>
        <authorList>
            <person name="Deng W."/>
            <person name="Burland V."/>
            <person name="Plunkett G. III"/>
            <person name="Boutin A."/>
            <person name="Mayhew G.F."/>
            <person name="Liss P."/>
            <person name="Perna N.T."/>
            <person name="Rose D.J."/>
            <person name="Mau B."/>
            <person name="Zhou S."/>
            <person name="Schwartz D.C."/>
            <person name="Fetherston J.D."/>
            <person name="Lindler L.E."/>
            <person name="Brubaker R.R."/>
            <person name="Plano G.V."/>
            <person name="Straley S.C."/>
            <person name="McDonough K.A."/>
            <person name="Nilles M.L."/>
            <person name="Matson J.S."/>
            <person name="Blattner F.R."/>
            <person name="Perry R.D."/>
        </authorList>
    </citation>
    <scope>NUCLEOTIDE SEQUENCE [LARGE SCALE GENOMIC DNA]</scope>
    <source>
        <strain>KIM10+ / Biovar Mediaevalis</strain>
    </source>
</reference>
<reference key="3">
    <citation type="journal article" date="2004" name="DNA Res.">
        <title>Complete genome sequence of Yersinia pestis strain 91001, an isolate avirulent to humans.</title>
        <authorList>
            <person name="Song Y."/>
            <person name="Tong Z."/>
            <person name="Wang J."/>
            <person name="Wang L."/>
            <person name="Guo Z."/>
            <person name="Han Y."/>
            <person name="Zhang J."/>
            <person name="Pei D."/>
            <person name="Zhou D."/>
            <person name="Qin H."/>
            <person name="Pang X."/>
            <person name="Han Y."/>
            <person name="Zhai J."/>
            <person name="Li M."/>
            <person name="Cui B."/>
            <person name="Qi Z."/>
            <person name="Jin L."/>
            <person name="Dai R."/>
            <person name="Chen F."/>
            <person name="Li S."/>
            <person name="Ye C."/>
            <person name="Du Z."/>
            <person name="Lin W."/>
            <person name="Wang J."/>
            <person name="Yu J."/>
            <person name="Yang H."/>
            <person name="Wang J."/>
            <person name="Huang P."/>
            <person name="Yang R."/>
        </authorList>
    </citation>
    <scope>NUCLEOTIDE SEQUENCE [LARGE SCALE GENOMIC DNA]</scope>
    <source>
        <strain>91001 / Biovar Mediaevalis</strain>
    </source>
</reference>
<name>RPOZ_YERPE</name>
<evidence type="ECO:0000255" key="1">
    <source>
        <dbReference type="HAMAP-Rule" id="MF_00366"/>
    </source>
</evidence>
<sequence>MARVTVQDAVEKIGNRFDLVLVAARRARQIQSGGKDALVPEENDKVTVIALREIEEGLITNQILDVRERQEQQEQQAAEIQAVTAIAEGRR</sequence>
<organism>
    <name type="scientific">Yersinia pestis</name>
    <dbReference type="NCBI Taxonomy" id="632"/>
    <lineage>
        <taxon>Bacteria</taxon>
        <taxon>Pseudomonadati</taxon>
        <taxon>Pseudomonadota</taxon>
        <taxon>Gammaproteobacteria</taxon>
        <taxon>Enterobacterales</taxon>
        <taxon>Yersiniaceae</taxon>
        <taxon>Yersinia</taxon>
    </lineage>
</organism>
<feature type="chain" id="PRO_0000129019" description="DNA-directed RNA polymerase subunit omega">
    <location>
        <begin position="1"/>
        <end position="91"/>
    </location>
</feature>
<keyword id="KW-0240">DNA-directed RNA polymerase</keyword>
<keyword id="KW-0548">Nucleotidyltransferase</keyword>
<keyword id="KW-1185">Reference proteome</keyword>
<keyword id="KW-0804">Transcription</keyword>
<keyword id="KW-0808">Transferase</keyword>
<comment type="function">
    <text evidence="1">Promotes RNA polymerase assembly. Latches the N- and C-terminal regions of the beta' subunit thereby facilitating its interaction with the beta and alpha subunits.</text>
</comment>
<comment type="catalytic activity">
    <reaction evidence="1">
        <text>RNA(n) + a ribonucleoside 5'-triphosphate = RNA(n+1) + diphosphate</text>
        <dbReference type="Rhea" id="RHEA:21248"/>
        <dbReference type="Rhea" id="RHEA-COMP:14527"/>
        <dbReference type="Rhea" id="RHEA-COMP:17342"/>
        <dbReference type="ChEBI" id="CHEBI:33019"/>
        <dbReference type="ChEBI" id="CHEBI:61557"/>
        <dbReference type="ChEBI" id="CHEBI:140395"/>
        <dbReference type="EC" id="2.7.7.6"/>
    </reaction>
</comment>
<comment type="subunit">
    <text evidence="1">The RNAP catalytic core consists of 2 alpha, 1 beta, 1 beta' and 1 omega subunit. When a sigma factor is associated with the core the holoenzyme is formed, which can initiate transcription.</text>
</comment>
<comment type="similarity">
    <text evidence="1">Belongs to the RNA polymerase subunit omega family.</text>
</comment>
<gene>
    <name evidence="1" type="primary">rpoZ</name>
    <name type="ordered locus">YPO0039</name>
    <name type="ordered locus">y0102</name>
    <name type="ordered locus">YP_0040</name>
</gene>
<proteinExistence type="inferred from homology"/>
<dbReference type="EC" id="2.7.7.6" evidence="1"/>
<dbReference type="EMBL" id="AL590842">
    <property type="protein sequence ID" value="CAL18729.1"/>
    <property type="molecule type" value="Genomic_DNA"/>
</dbReference>
<dbReference type="EMBL" id="AE009952">
    <property type="protein sequence ID" value="AAM83696.1"/>
    <property type="molecule type" value="Genomic_DNA"/>
</dbReference>
<dbReference type="EMBL" id="AE017042">
    <property type="protein sequence ID" value="AAS60321.1"/>
    <property type="molecule type" value="Genomic_DNA"/>
</dbReference>
<dbReference type="PIR" id="AH0005">
    <property type="entry name" value="AH0005"/>
</dbReference>
<dbReference type="RefSeq" id="WP_002209001.1">
    <property type="nucleotide sequence ID" value="NZ_WUCM01000015.1"/>
</dbReference>
<dbReference type="RefSeq" id="YP_002345135.1">
    <property type="nucleotide sequence ID" value="NC_003143.1"/>
</dbReference>
<dbReference type="SMR" id="Q8ZJQ3"/>
<dbReference type="STRING" id="214092.YPO0039"/>
<dbReference type="PaxDb" id="214092-YPO0039"/>
<dbReference type="DNASU" id="1145049"/>
<dbReference type="EnsemblBacteria" id="AAS60321">
    <property type="protein sequence ID" value="AAS60321"/>
    <property type="gene ID" value="YP_0040"/>
</dbReference>
<dbReference type="GeneID" id="57974551"/>
<dbReference type="KEGG" id="ype:YPO0039"/>
<dbReference type="KEGG" id="ypk:y0102"/>
<dbReference type="KEGG" id="ypm:YP_0040"/>
<dbReference type="PATRIC" id="fig|214092.21.peg.262"/>
<dbReference type="eggNOG" id="COG1758">
    <property type="taxonomic scope" value="Bacteria"/>
</dbReference>
<dbReference type="HOGENOM" id="CLU_125406_5_3_6"/>
<dbReference type="OMA" id="NVDNRFQ"/>
<dbReference type="OrthoDB" id="9796300at2"/>
<dbReference type="Proteomes" id="UP000000815">
    <property type="component" value="Chromosome"/>
</dbReference>
<dbReference type="Proteomes" id="UP000001019">
    <property type="component" value="Chromosome"/>
</dbReference>
<dbReference type="Proteomes" id="UP000002490">
    <property type="component" value="Chromosome"/>
</dbReference>
<dbReference type="GO" id="GO:0000345">
    <property type="term" value="C:cytosolic DNA-directed RNA polymerase complex"/>
    <property type="evidence" value="ECO:0000318"/>
    <property type="project" value="GO_Central"/>
</dbReference>
<dbReference type="GO" id="GO:0001000">
    <property type="term" value="F:bacterial-type RNA polymerase core enzyme binding"/>
    <property type="evidence" value="ECO:0000318"/>
    <property type="project" value="GO_Central"/>
</dbReference>
<dbReference type="GO" id="GO:0003677">
    <property type="term" value="F:DNA binding"/>
    <property type="evidence" value="ECO:0007669"/>
    <property type="project" value="UniProtKB-UniRule"/>
</dbReference>
<dbReference type="GO" id="GO:0003899">
    <property type="term" value="F:DNA-directed RNA polymerase activity"/>
    <property type="evidence" value="ECO:0007669"/>
    <property type="project" value="UniProtKB-UniRule"/>
</dbReference>
<dbReference type="GO" id="GO:0006352">
    <property type="term" value="P:DNA-templated transcription initiation"/>
    <property type="evidence" value="ECO:0000318"/>
    <property type="project" value="GO_Central"/>
</dbReference>
<dbReference type="FunFam" id="3.90.940.10:FF:000001">
    <property type="entry name" value="DNA-directed RNA polymerase subunit omega"/>
    <property type="match status" value="1"/>
</dbReference>
<dbReference type="Gene3D" id="3.90.940.10">
    <property type="match status" value="1"/>
</dbReference>
<dbReference type="HAMAP" id="MF_00366">
    <property type="entry name" value="RNApol_bact_RpoZ"/>
    <property type="match status" value="1"/>
</dbReference>
<dbReference type="InterPro" id="IPR003716">
    <property type="entry name" value="DNA-dir_RNA_pol_omega"/>
</dbReference>
<dbReference type="InterPro" id="IPR006110">
    <property type="entry name" value="Pol_omega/Rpo6/RPB6"/>
</dbReference>
<dbReference type="InterPro" id="IPR036161">
    <property type="entry name" value="RPB6/omega-like_sf"/>
</dbReference>
<dbReference type="NCBIfam" id="TIGR00690">
    <property type="entry name" value="rpoZ"/>
    <property type="match status" value="1"/>
</dbReference>
<dbReference type="PANTHER" id="PTHR34476">
    <property type="entry name" value="DNA-DIRECTED RNA POLYMERASE SUBUNIT OMEGA"/>
    <property type="match status" value="1"/>
</dbReference>
<dbReference type="PANTHER" id="PTHR34476:SF1">
    <property type="entry name" value="DNA-DIRECTED RNA POLYMERASE SUBUNIT OMEGA"/>
    <property type="match status" value="1"/>
</dbReference>
<dbReference type="Pfam" id="PF01192">
    <property type="entry name" value="RNA_pol_Rpb6"/>
    <property type="match status" value="1"/>
</dbReference>
<dbReference type="SMART" id="SM01409">
    <property type="entry name" value="RNA_pol_Rpb6"/>
    <property type="match status" value="1"/>
</dbReference>
<dbReference type="SUPFAM" id="SSF63562">
    <property type="entry name" value="RPB6/omega subunit-like"/>
    <property type="match status" value="1"/>
</dbReference>